<name>MYO1_LODEL</name>
<accession>A5E4A8</accession>
<organism>
    <name type="scientific">Lodderomyces elongisporus (strain ATCC 11503 / CBS 2605 / JCM 1781 / NBRC 1676 / NRRL YB-4239)</name>
    <name type="common">Yeast</name>
    <name type="synonym">Saccharomyces elongisporus</name>
    <dbReference type="NCBI Taxonomy" id="379508"/>
    <lineage>
        <taxon>Eukaryota</taxon>
        <taxon>Fungi</taxon>
        <taxon>Dikarya</taxon>
        <taxon>Ascomycota</taxon>
        <taxon>Saccharomycotina</taxon>
        <taxon>Pichiomycetes</taxon>
        <taxon>Debaryomycetaceae</taxon>
        <taxon>Candida/Lodderomyces clade</taxon>
        <taxon>Lodderomyces</taxon>
    </lineage>
</organism>
<reference key="1">
    <citation type="journal article" date="2009" name="Nature">
        <title>Evolution of pathogenicity and sexual reproduction in eight Candida genomes.</title>
        <authorList>
            <person name="Butler G."/>
            <person name="Rasmussen M.D."/>
            <person name="Lin M.F."/>
            <person name="Santos M.A.S."/>
            <person name="Sakthikumar S."/>
            <person name="Munro C.A."/>
            <person name="Rheinbay E."/>
            <person name="Grabherr M."/>
            <person name="Forche A."/>
            <person name="Reedy J.L."/>
            <person name="Agrafioti I."/>
            <person name="Arnaud M.B."/>
            <person name="Bates S."/>
            <person name="Brown A.J.P."/>
            <person name="Brunke S."/>
            <person name="Costanzo M.C."/>
            <person name="Fitzpatrick D.A."/>
            <person name="de Groot P.W.J."/>
            <person name="Harris D."/>
            <person name="Hoyer L.L."/>
            <person name="Hube B."/>
            <person name="Klis F.M."/>
            <person name="Kodira C."/>
            <person name="Lennard N."/>
            <person name="Logue M.E."/>
            <person name="Martin R."/>
            <person name="Neiman A.M."/>
            <person name="Nikolaou E."/>
            <person name="Quail M.A."/>
            <person name="Quinn J."/>
            <person name="Santos M.C."/>
            <person name="Schmitzberger F.F."/>
            <person name="Sherlock G."/>
            <person name="Shah P."/>
            <person name="Silverstein K.A.T."/>
            <person name="Skrzypek M.S."/>
            <person name="Soll D."/>
            <person name="Staggs R."/>
            <person name="Stansfield I."/>
            <person name="Stumpf M.P.H."/>
            <person name="Sudbery P.E."/>
            <person name="Srikantha T."/>
            <person name="Zeng Q."/>
            <person name="Berman J."/>
            <person name="Berriman M."/>
            <person name="Heitman J."/>
            <person name="Gow N.A.R."/>
            <person name="Lorenz M.C."/>
            <person name="Birren B.W."/>
            <person name="Kellis M."/>
            <person name="Cuomo C.A."/>
        </authorList>
    </citation>
    <scope>NUCLEOTIDE SEQUENCE [LARGE SCALE GENOMIC DNA]</scope>
    <source>
        <strain>ATCC 11503 / BCRC 21390 / CBS 2605 / JCM 1781 / NBRC 1676 / NRRL YB-4239</strain>
    </source>
</reference>
<proteinExistence type="inferred from homology"/>
<comment type="function">
    <text evidence="1">Type-I myosin implicated in the organization of the actin cytoskeleton. Required for proper actin cytoskeleton polarization. At the cell cortex, assembles in patch-like structures together with proteins from the actin-polymerizing machinery and promotes actin assembly. Functions as actin nucleation-promoting factor (NPF) for the Arp2/3 complex (By similarity).</text>
</comment>
<comment type="subcellular location">
    <subcellularLocation>
        <location evidence="1">Cytoplasm</location>
        <location evidence="1">Cytoskeleton</location>
        <location evidence="1">Actin patch</location>
    </subcellularLocation>
</comment>
<comment type="domain">
    <text evidence="1">The myosin motor domain displays actin-stimulated ATPase activity and generates a mechanochemical force.</text>
</comment>
<comment type="domain">
    <text evidence="1">The tail domain participates in molecular interactions that specify the role of the motor domain (By similarity). It is composed of several tail homology (TH) domains, namely a putative phospholipid-binding myosin tail domain (also named TH1), an Ala- and Pro-rich domain (TH2), followed by an SH3 domain and a C-terminal acidic domain (TH3).</text>
</comment>
<comment type="PTM">
    <text evidence="1">Phosphorylation of the TEDS site (Ser-371) is required for the polarization of the actin cytoskeleton. Phosphorylation probably activates the myosin-I ATPase activity (By similarity).</text>
</comment>
<comment type="similarity">
    <text evidence="7">Belongs to the TRAFAC class myosin-kinesin ATPase superfamily. Myosin family.</text>
</comment>
<feature type="chain" id="PRO_0000338554" description="Myosin-1">
    <location>
        <begin position="1"/>
        <end position="1279"/>
    </location>
</feature>
<feature type="domain" description="Myosin motor" evidence="4">
    <location>
        <begin position="48"/>
        <end position="736"/>
    </location>
</feature>
<feature type="domain" description="IQ 1">
    <location>
        <begin position="740"/>
        <end position="760"/>
    </location>
</feature>
<feature type="domain" description="IQ 2">
    <location>
        <begin position="761"/>
        <end position="786"/>
    </location>
</feature>
<feature type="domain" description="TH1" evidence="5">
    <location>
        <begin position="794"/>
        <end position="984"/>
    </location>
</feature>
<feature type="domain" description="SH3" evidence="3">
    <location>
        <begin position="1129"/>
        <end position="1189"/>
    </location>
</feature>
<feature type="region of interest" description="Disordered" evidence="6">
    <location>
        <begin position="1"/>
        <end position="25"/>
    </location>
</feature>
<feature type="region of interest" description="Actin-binding" evidence="1">
    <location>
        <begin position="419"/>
        <end position="502"/>
    </location>
</feature>
<feature type="region of interest" description="Disordered" evidence="6">
    <location>
        <begin position="980"/>
        <end position="1001"/>
    </location>
</feature>
<feature type="region of interest" description="Disordered" evidence="6">
    <location>
        <begin position="1014"/>
        <end position="1132"/>
    </location>
</feature>
<feature type="region of interest" description="Disordered" evidence="6">
    <location>
        <begin position="1189"/>
        <end position="1216"/>
    </location>
</feature>
<feature type="region of interest" description="Disordered" evidence="6">
    <location>
        <begin position="1253"/>
        <end position="1279"/>
    </location>
</feature>
<feature type="compositionally biased region" description="Basic residues" evidence="6">
    <location>
        <begin position="1"/>
        <end position="12"/>
    </location>
</feature>
<feature type="compositionally biased region" description="Polar residues" evidence="6">
    <location>
        <begin position="980"/>
        <end position="989"/>
    </location>
</feature>
<feature type="compositionally biased region" description="Polar residues" evidence="6">
    <location>
        <begin position="1018"/>
        <end position="1027"/>
    </location>
</feature>
<feature type="compositionally biased region" description="Low complexity" evidence="6">
    <location>
        <begin position="1038"/>
        <end position="1056"/>
    </location>
</feature>
<feature type="compositionally biased region" description="Low complexity" evidence="6">
    <location>
        <begin position="1067"/>
        <end position="1095"/>
    </location>
</feature>
<feature type="compositionally biased region" description="Pro residues" evidence="6">
    <location>
        <begin position="1116"/>
        <end position="1126"/>
    </location>
</feature>
<feature type="compositionally biased region" description="Polar residues" evidence="6">
    <location>
        <begin position="1189"/>
        <end position="1209"/>
    </location>
</feature>
<feature type="compositionally biased region" description="Acidic residues" evidence="6">
    <location>
        <begin position="1268"/>
        <end position="1279"/>
    </location>
</feature>
<feature type="binding site" evidence="2">
    <location>
        <begin position="141"/>
        <end position="148"/>
    </location>
    <ligand>
        <name>ATP</name>
        <dbReference type="ChEBI" id="CHEBI:30616"/>
    </ligand>
</feature>
<feature type="modified residue" description="Phosphoserine" evidence="1">
    <location>
        <position position="371"/>
    </location>
</feature>
<dbReference type="EMBL" id="CH981529">
    <property type="protein sequence ID" value="EDK46266.1"/>
    <property type="molecule type" value="Genomic_DNA"/>
</dbReference>
<dbReference type="RefSeq" id="XP_001524475.1">
    <property type="nucleotide sequence ID" value="XM_001524425.1"/>
</dbReference>
<dbReference type="SMR" id="A5E4A8"/>
<dbReference type="FunCoup" id="A5E4A8">
    <property type="interactions" value="330"/>
</dbReference>
<dbReference type="STRING" id="379508.A5E4A8"/>
<dbReference type="GeneID" id="5231750"/>
<dbReference type="KEGG" id="lel:PVL30_004163"/>
<dbReference type="VEuPathDB" id="FungiDB:LELG_04447"/>
<dbReference type="eggNOG" id="KOG0162">
    <property type="taxonomic scope" value="Eukaryota"/>
</dbReference>
<dbReference type="HOGENOM" id="CLU_000192_7_6_1"/>
<dbReference type="InParanoid" id="A5E4A8"/>
<dbReference type="OMA" id="PPEEYQM"/>
<dbReference type="OrthoDB" id="6108017at2759"/>
<dbReference type="Proteomes" id="UP000001996">
    <property type="component" value="Unassembled WGS sequence"/>
</dbReference>
<dbReference type="GO" id="GO:0030479">
    <property type="term" value="C:actin cortical patch"/>
    <property type="evidence" value="ECO:0007669"/>
    <property type="project" value="UniProtKB-SubCell"/>
</dbReference>
<dbReference type="GO" id="GO:0051285">
    <property type="term" value="C:cell cortex of cell tip"/>
    <property type="evidence" value="ECO:0007669"/>
    <property type="project" value="EnsemblFungi"/>
</dbReference>
<dbReference type="GO" id="GO:0043332">
    <property type="term" value="C:mating projection tip"/>
    <property type="evidence" value="ECO:0007669"/>
    <property type="project" value="EnsemblFungi"/>
</dbReference>
<dbReference type="GO" id="GO:0031097">
    <property type="term" value="C:medial cortex"/>
    <property type="evidence" value="ECO:0007669"/>
    <property type="project" value="EnsemblFungi"/>
</dbReference>
<dbReference type="GO" id="GO:0045160">
    <property type="term" value="C:myosin I complex"/>
    <property type="evidence" value="ECO:0007669"/>
    <property type="project" value="EnsemblFungi"/>
</dbReference>
<dbReference type="GO" id="GO:0044853">
    <property type="term" value="C:plasma membrane raft"/>
    <property type="evidence" value="ECO:0007669"/>
    <property type="project" value="EnsemblFungi"/>
</dbReference>
<dbReference type="GO" id="GO:0005628">
    <property type="term" value="C:prospore membrane"/>
    <property type="evidence" value="ECO:0007669"/>
    <property type="project" value="EnsemblFungi"/>
</dbReference>
<dbReference type="GO" id="GO:0051015">
    <property type="term" value="F:actin filament binding"/>
    <property type="evidence" value="ECO:0007669"/>
    <property type="project" value="EnsemblFungi"/>
</dbReference>
<dbReference type="GO" id="GO:0071933">
    <property type="term" value="F:Arp2/3 complex binding"/>
    <property type="evidence" value="ECO:0007669"/>
    <property type="project" value="EnsemblFungi"/>
</dbReference>
<dbReference type="GO" id="GO:0005524">
    <property type="term" value="F:ATP binding"/>
    <property type="evidence" value="ECO:0007669"/>
    <property type="project" value="UniProtKB-KW"/>
</dbReference>
<dbReference type="GO" id="GO:0016787">
    <property type="term" value="F:hydrolase activity"/>
    <property type="evidence" value="ECO:0007669"/>
    <property type="project" value="UniProtKB-KW"/>
</dbReference>
<dbReference type="GO" id="GO:0000146">
    <property type="term" value="F:microfilament motor activity"/>
    <property type="evidence" value="ECO:0007669"/>
    <property type="project" value="EnsemblFungi"/>
</dbReference>
<dbReference type="GO" id="GO:0000147">
    <property type="term" value="P:actin cortical patch assembly"/>
    <property type="evidence" value="ECO:0007669"/>
    <property type="project" value="EnsemblFungi"/>
</dbReference>
<dbReference type="GO" id="GO:0051666">
    <property type="term" value="P:actin cortical patch localization"/>
    <property type="evidence" value="ECO:0007669"/>
    <property type="project" value="TreeGrafter"/>
</dbReference>
<dbReference type="GO" id="GO:0007015">
    <property type="term" value="P:actin filament organization"/>
    <property type="evidence" value="ECO:0007669"/>
    <property type="project" value="TreeGrafter"/>
</dbReference>
<dbReference type="GO" id="GO:0006897">
    <property type="term" value="P:endocytosis"/>
    <property type="evidence" value="ECO:0007669"/>
    <property type="project" value="EnsemblFungi"/>
</dbReference>
<dbReference type="GO" id="GO:0030447">
    <property type="term" value="P:filamentous growth"/>
    <property type="evidence" value="ECO:0007669"/>
    <property type="project" value="UniProtKB-ARBA"/>
</dbReference>
<dbReference type="GO" id="GO:0000281">
    <property type="term" value="P:mitotic cytokinesis"/>
    <property type="evidence" value="ECO:0007669"/>
    <property type="project" value="EnsemblFungi"/>
</dbReference>
<dbReference type="CDD" id="cd01378">
    <property type="entry name" value="MYSc_Myo1"/>
    <property type="match status" value="1"/>
</dbReference>
<dbReference type="CDD" id="cd11858">
    <property type="entry name" value="SH3_Myosin-I_fungi"/>
    <property type="match status" value="1"/>
</dbReference>
<dbReference type="FunFam" id="1.10.10.820:FF:000001">
    <property type="entry name" value="Myosin heavy chain"/>
    <property type="match status" value="1"/>
</dbReference>
<dbReference type="FunFam" id="1.20.120.720:FF:000015">
    <property type="entry name" value="Myosin I"/>
    <property type="match status" value="1"/>
</dbReference>
<dbReference type="FunFam" id="1.20.5.4820:FF:000004">
    <property type="entry name" value="Myosin IE"/>
    <property type="match status" value="1"/>
</dbReference>
<dbReference type="FunFam" id="1.20.58.530:FF:000007">
    <property type="entry name" value="Myosin IE"/>
    <property type="match status" value="1"/>
</dbReference>
<dbReference type="Gene3D" id="1.10.10.820">
    <property type="match status" value="1"/>
</dbReference>
<dbReference type="Gene3D" id="1.20.5.4820">
    <property type="match status" value="1"/>
</dbReference>
<dbReference type="Gene3D" id="1.20.58.530">
    <property type="match status" value="1"/>
</dbReference>
<dbReference type="Gene3D" id="3.40.850.10">
    <property type="entry name" value="Kinesin motor domain"/>
    <property type="match status" value="1"/>
</dbReference>
<dbReference type="Gene3D" id="1.20.120.720">
    <property type="entry name" value="Myosin VI head, motor domain, U50 subdomain"/>
    <property type="match status" value="1"/>
</dbReference>
<dbReference type="Gene3D" id="2.30.30.40">
    <property type="entry name" value="SH3 Domains"/>
    <property type="match status" value="1"/>
</dbReference>
<dbReference type="InterPro" id="IPR035535">
    <property type="entry name" value="Fungal_myosin-I_SH3"/>
</dbReference>
<dbReference type="InterPro" id="IPR036961">
    <property type="entry name" value="Kinesin_motor_dom_sf"/>
</dbReference>
<dbReference type="InterPro" id="IPR001609">
    <property type="entry name" value="Myosin_head_motor_dom-like"/>
</dbReference>
<dbReference type="InterPro" id="IPR010926">
    <property type="entry name" value="Myosin_TH1"/>
</dbReference>
<dbReference type="InterPro" id="IPR036072">
    <property type="entry name" value="MYSc_Myo1"/>
</dbReference>
<dbReference type="InterPro" id="IPR027417">
    <property type="entry name" value="P-loop_NTPase"/>
</dbReference>
<dbReference type="InterPro" id="IPR036028">
    <property type="entry name" value="SH3-like_dom_sf"/>
</dbReference>
<dbReference type="InterPro" id="IPR001452">
    <property type="entry name" value="SH3_domain"/>
</dbReference>
<dbReference type="PANTHER" id="PTHR13140">
    <property type="entry name" value="MYOSIN"/>
    <property type="match status" value="1"/>
</dbReference>
<dbReference type="PANTHER" id="PTHR13140:SF837">
    <property type="entry name" value="MYOSIN-3-RELATED"/>
    <property type="match status" value="1"/>
</dbReference>
<dbReference type="Pfam" id="PF00063">
    <property type="entry name" value="Myosin_head"/>
    <property type="match status" value="1"/>
</dbReference>
<dbReference type="Pfam" id="PF06017">
    <property type="entry name" value="Myosin_TH1"/>
    <property type="match status" value="1"/>
</dbReference>
<dbReference type="PRINTS" id="PR00193">
    <property type="entry name" value="MYOSINHEAVY"/>
</dbReference>
<dbReference type="SMART" id="SM00242">
    <property type="entry name" value="MYSc"/>
    <property type="match status" value="1"/>
</dbReference>
<dbReference type="SMART" id="SM00326">
    <property type="entry name" value="SH3"/>
    <property type="match status" value="1"/>
</dbReference>
<dbReference type="SUPFAM" id="SSF52540">
    <property type="entry name" value="P-loop containing nucleoside triphosphate hydrolases"/>
    <property type="match status" value="1"/>
</dbReference>
<dbReference type="SUPFAM" id="SSF50044">
    <property type="entry name" value="SH3-domain"/>
    <property type="match status" value="1"/>
</dbReference>
<dbReference type="PROSITE" id="PS51456">
    <property type="entry name" value="MYOSIN_MOTOR"/>
    <property type="match status" value="1"/>
</dbReference>
<dbReference type="PROSITE" id="PS50002">
    <property type="entry name" value="SH3"/>
    <property type="match status" value="1"/>
</dbReference>
<dbReference type="PROSITE" id="PS51757">
    <property type="entry name" value="TH1"/>
    <property type="match status" value="1"/>
</dbReference>
<gene>
    <name type="primary">MYO1</name>
    <name type="ORF">LELG_04447</name>
</gene>
<protein>
    <recommendedName>
        <fullName>Myosin-1</fullName>
    </recommendedName>
    <alternativeName>
        <fullName>Class I unconventional myosin</fullName>
    </alternativeName>
    <alternativeName>
        <fullName>Type I myosin</fullName>
    </alternativeName>
</protein>
<evidence type="ECO:0000250" key="1"/>
<evidence type="ECO:0000255" key="2"/>
<evidence type="ECO:0000255" key="3">
    <source>
        <dbReference type="PROSITE-ProRule" id="PRU00192"/>
    </source>
</evidence>
<evidence type="ECO:0000255" key="4">
    <source>
        <dbReference type="PROSITE-ProRule" id="PRU00782"/>
    </source>
</evidence>
<evidence type="ECO:0000255" key="5">
    <source>
        <dbReference type="PROSITE-ProRule" id="PRU01093"/>
    </source>
</evidence>
<evidence type="ECO:0000256" key="6">
    <source>
        <dbReference type="SAM" id="MobiDB-lite"/>
    </source>
</evidence>
<evidence type="ECO:0000305" key="7"/>
<sequence length="1279" mass="142675">MAIVKRGGRTRAKQQQAPAKVNNGLGAGAGAGGGIQKAEFDITKKKEVGVSDLTLLSKITDEAINENLHKRFMNDTIYTYIGHVLISVNPFRDLGIYTLENLNKYKGRNRLEVPPHVFAIAESMYYHLKSYGENQCVIISGESGAGKTEAAKQIMQYIANVSVDSGNAEISKIKDMVLATNPLLESFGCAKTLRNNNSSRHGKYLEIKFSEGSYQPIAAHITNYLLEKQRVVSQITNERNFHIFYQFTKHCPPQYQQQFGIQGPETYVYTSAAKCITVDGIDDGKDFKDTLNAMNIIGLSQAEQDNIFRILALILWTGNISFVEDESGNAAIRDDSVTNFVAYLLDVNAEILKKAITERTIETSHGMKRGSTYHVPLNIVQATAVRDALAKGLYNNLFDWIVERVNLSLQGNQGQSEKSIGILDIYGFEIFEHNSFEQICINYVNEKLQQIFIQLTLKAEQDEYVQEQIKWTPIDYFNNKVVCDLIEATRPQPGLFAALNDSIKTAHADSDAADQVFAQRLSMVGASNRHFEDRRGKFIIKHYAGDVTYDVAGMTDKNKDAMLRDLLELLGTSSNAFVTQTLFPPNLLSELVDSKKRPETASDKIKKSANILVDTLSQATPSYIRTIKPNQTKKPRDYDNQQVLHQIKYLGLKENVRIRRAGFAYRSTFQRFVQRFYLLSPATGYAGDYIWQGDDLTAVKEILRACHIPTSEYQLGTTKVFIKTPETLFALEDMRDKYWHNMAARIQRAWRRYIKRKEDAAKTIQRAWRMKNHGNQFEQFRDYGNSLLQGRKERRRFSMLGSRAYMGDYLACNDKTGFGRFVVNQVGIKEPVVFSAKGVILLSKFGRSSKRFPRIFVLTKSNLYIIAEVLVEKRLQLQREFALPVHLIKSVGLSQLQDNWVAVCLLSPTTTTPDVFINLDFKTELVAQLKKLNSGLSILIGPTVQYQKKPGKYQTVKFAIGSGPHIPPLIDSYKSGTVTVNQGLPPTSKNPKRPRAKLGKVDYSKYYNRGVRSLAQPAFQSQPTASYRSEPAYPQPTTQLYATQHQPQQPQVPTRTASRKAPPPAPSTQTAAQVSTLPQAARKPAAPARPAKKIAPQPPVKKAVSPQPPAKKTVAAPPPPPPPPALSKPKHPTYRAMYDYDGSVAGSVPLVKDTIYYVLQINGKWGLVKTMDETQEGWSPIDYLQEESSPSASAATQSYAPTTASSNPVSTASSNTYTNTTQATTMLNGSLGNGLADALKAKKSEETTLAGSLADALKKRQGVTRDDSDAEDDDDDDDW</sequence>
<keyword id="KW-0009">Actin-binding</keyword>
<keyword id="KW-0067">ATP-binding</keyword>
<keyword id="KW-0963">Cytoplasm</keyword>
<keyword id="KW-0206">Cytoskeleton</keyword>
<keyword id="KW-0378">Hydrolase</keyword>
<keyword id="KW-0505">Motor protein</keyword>
<keyword id="KW-0518">Myosin</keyword>
<keyword id="KW-0547">Nucleotide-binding</keyword>
<keyword id="KW-0597">Phosphoprotein</keyword>
<keyword id="KW-1185">Reference proteome</keyword>
<keyword id="KW-0677">Repeat</keyword>
<keyword id="KW-0728">SH3 domain</keyword>